<organism>
    <name type="scientific">Caenorhabditis elegans</name>
    <dbReference type="NCBI Taxonomy" id="6239"/>
    <lineage>
        <taxon>Eukaryota</taxon>
        <taxon>Metazoa</taxon>
        <taxon>Ecdysozoa</taxon>
        <taxon>Nematoda</taxon>
        <taxon>Chromadorea</taxon>
        <taxon>Rhabditida</taxon>
        <taxon>Rhabditina</taxon>
        <taxon>Rhabditomorpha</taxon>
        <taxon>Rhabditoidea</taxon>
        <taxon>Rhabditidae</taxon>
        <taxon>Peloderinae</taxon>
        <taxon>Caenorhabditis</taxon>
    </lineage>
</organism>
<accession>Q10917</accession>
<accession>Q7YZF8</accession>
<dbReference type="EMBL" id="FO080139">
    <property type="protein sequence ID" value="CCD61538.1"/>
    <property type="molecule type" value="Genomic_DNA"/>
</dbReference>
<dbReference type="EMBL" id="FO080139">
    <property type="protein sequence ID" value="CCD61539.1"/>
    <property type="molecule type" value="Genomic_DNA"/>
</dbReference>
<dbReference type="PIR" id="T15290">
    <property type="entry name" value="T15290"/>
</dbReference>
<dbReference type="RefSeq" id="NP_001021887.1">
    <property type="nucleotide sequence ID" value="NM_001026716.4"/>
</dbReference>
<dbReference type="RefSeq" id="NP_001021888.1">
    <molecule id="Q10917-1"/>
    <property type="nucleotide sequence ID" value="NM_001026717.6"/>
</dbReference>
<dbReference type="RefSeq" id="NP_001367331.1">
    <molecule id="Q10917-2"/>
    <property type="nucleotide sequence ID" value="NM_001381468.2"/>
</dbReference>
<dbReference type="SMR" id="Q10917"/>
<dbReference type="BioGRID" id="39468">
    <property type="interactions" value="1"/>
</dbReference>
<dbReference type="IntAct" id="Q10917">
    <property type="interactions" value="1"/>
</dbReference>
<dbReference type="STRING" id="6239.B0252.3b.1"/>
<dbReference type="PaxDb" id="6239-B0252.3b"/>
<dbReference type="PeptideAtlas" id="Q10917"/>
<dbReference type="EnsemblMetazoa" id="B0252.3a.1">
    <molecule id="Q10917-2"/>
    <property type="protein sequence ID" value="B0252.3a.1"/>
    <property type="gene ID" value="WBGene00015088"/>
</dbReference>
<dbReference type="EnsemblMetazoa" id="B0252.3a.2">
    <molecule id="Q10917-2"/>
    <property type="protein sequence ID" value="B0252.3a.2"/>
    <property type="gene ID" value="WBGene00015088"/>
</dbReference>
<dbReference type="EnsemblMetazoa" id="B0252.3a.3">
    <molecule id="Q10917-2"/>
    <property type="protein sequence ID" value="B0252.3a.3"/>
    <property type="gene ID" value="WBGene00015088"/>
</dbReference>
<dbReference type="EnsemblMetazoa" id="B0252.3a.4">
    <molecule id="Q10917-2"/>
    <property type="protein sequence ID" value="B0252.3a.4"/>
    <property type="gene ID" value="WBGene00015088"/>
</dbReference>
<dbReference type="EnsemblMetazoa" id="B0252.3b.1">
    <molecule id="Q10917-1"/>
    <property type="protein sequence ID" value="B0252.3b.1"/>
    <property type="gene ID" value="WBGene00015088"/>
</dbReference>
<dbReference type="GeneID" id="174130"/>
<dbReference type="KEGG" id="cel:CELE_B0252.3"/>
<dbReference type="UCSC" id="B0252.3b">
    <molecule id="Q10917-1"/>
    <property type="organism name" value="c. elegans"/>
</dbReference>
<dbReference type="AGR" id="WB:WBGene00015088"/>
<dbReference type="CTD" id="174130"/>
<dbReference type="WormBase" id="B0252.3a">
    <molecule id="Q10917-2"/>
    <property type="protein sequence ID" value="CE32095"/>
    <property type="gene ID" value="WBGene00015088"/>
</dbReference>
<dbReference type="WormBase" id="B0252.3b">
    <molecule id="Q10917-1"/>
    <property type="protein sequence ID" value="CE34631"/>
    <property type="gene ID" value="WBGene00015088"/>
</dbReference>
<dbReference type="eggNOG" id="KOG0255">
    <property type="taxonomic scope" value="Eukaryota"/>
</dbReference>
<dbReference type="GeneTree" id="ENSGT00940000164843"/>
<dbReference type="InParanoid" id="Q10917"/>
<dbReference type="OMA" id="WVLGYEN"/>
<dbReference type="OrthoDB" id="5296287at2759"/>
<dbReference type="PhylomeDB" id="Q10917"/>
<dbReference type="Reactome" id="R-CEL-112311">
    <property type="pathway name" value="Neurotransmitter clearance"/>
</dbReference>
<dbReference type="Reactome" id="R-CEL-181430">
    <property type="pathway name" value="Norepinephrine Neurotransmitter Release Cycle"/>
</dbReference>
<dbReference type="Reactome" id="R-CEL-200425">
    <property type="pathway name" value="Carnitine shuttle"/>
</dbReference>
<dbReference type="Reactome" id="R-CEL-2161517">
    <property type="pathway name" value="Abacavir transmembrane transport"/>
</dbReference>
<dbReference type="Reactome" id="R-CEL-442660">
    <property type="pathway name" value="Na+/Cl- dependent neurotransmitter transporters"/>
</dbReference>
<dbReference type="Reactome" id="R-CEL-549127">
    <property type="pathway name" value="Organic cation transport"/>
</dbReference>
<dbReference type="Reactome" id="R-CEL-561048">
    <property type="pathway name" value="Organic anion transport"/>
</dbReference>
<dbReference type="Reactome" id="R-CEL-9749641">
    <property type="pathway name" value="Aspirin ADME"/>
</dbReference>
<dbReference type="Reactome" id="R-CEL-9793528">
    <property type="pathway name" value="Ciprofloxacin ADME"/>
</dbReference>
<dbReference type="PRO" id="PR:Q10917"/>
<dbReference type="Proteomes" id="UP000001940">
    <property type="component" value="Chromosome II"/>
</dbReference>
<dbReference type="Bgee" id="WBGene00015088">
    <property type="expression patterns" value="Expressed in larva and 3 other cell types or tissues"/>
</dbReference>
<dbReference type="ExpressionAtlas" id="Q10917">
    <property type="expression patterns" value="baseline and differential"/>
</dbReference>
<dbReference type="GO" id="GO:0016020">
    <property type="term" value="C:membrane"/>
    <property type="evidence" value="ECO:0007669"/>
    <property type="project" value="UniProtKB-SubCell"/>
</dbReference>
<dbReference type="GO" id="GO:0022857">
    <property type="term" value="F:transmembrane transporter activity"/>
    <property type="evidence" value="ECO:0007669"/>
    <property type="project" value="InterPro"/>
</dbReference>
<dbReference type="CDD" id="cd17317">
    <property type="entry name" value="MFS_SLC22"/>
    <property type="match status" value="1"/>
</dbReference>
<dbReference type="Gene3D" id="1.20.1250.20">
    <property type="entry name" value="MFS general substrate transporter like domains"/>
    <property type="match status" value="1"/>
</dbReference>
<dbReference type="InterPro" id="IPR020846">
    <property type="entry name" value="MFS_dom"/>
</dbReference>
<dbReference type="InterPro" id="IPR005828">
    <property type="entry name" value="MFS_sugar_transport-like"/>
</dbReference>
<dbReference type="InterPro" id="IPR036259">
    <property type="entry name" value="MFS_trans_sf"/>
</dbReference>
<dbReference type="PANTHER" id="PTHR24064">
    <property type="entry name" value="SOLUTE CARRIER FAMILY 22 MEMBER"/>
    <property type="match status" value="1"/>
</dbReference>
<dbReference type="Pfam" id="PF00083">
    <property type="entry name" value="Sugar_tr"/>
    <property type="match status" value="1"/>
</dbReference>
<dbReference type="SUPFAM" id="SSF103473">
    <property type="entry name" value="MFS general substrate transporter"/>
    <property type="match status" value="1"/>
</dbReference>
<dbReference type="PROSITE" id="PS50850">
    <property type="entry name" value="MFS"/>
    <property type="match status" value="1"/>
</dbReference>
<keyword id="KW-0025">Alternative splicing</keyword>
<keyword id="KW-0472">Membrane</keyword>
<keyword id="KW-1185">Reference proteome</keyword>
<keyword id="KW-0812">Transmembrane</keyword>
<keyword id="KW-1133">Transmembrane helix</keyword>
<keyword id="KW-0813">Transport</keyword>
<comment type="subcellular location">
    <subcellularLocation>
        <location evidence="2">Membrane</location>
        <topology evidence="2">Multi-pass membrane protein</topology>
    </subcellularLocation>
</comment>
<comment type="alternative products">
    <event type="alternative splicing"/>
    <isoform>
        <id>Q10917-1</id>
        <name>b</name>
        <sequence type="displayed"/>
    </isoform>
    <isoform>
        <id>Q10917-2</id>
        <name>a</name>
        <sequence type="described" ref="VSP_009463"/>
    </isoform>
</comment>
<comment type="similarity">
    <text evidence="2">Belongs to the major facilitator superfamily. Sugar transporter (TC 2.A.1.1) family.</text>
</comment>
<sequence length="484" mass="53737">MQVRWAPSDGSLGDYTYQQDMSSSDKLSADDVLNTLDKSNRHILTCILVCGLAWSPLAFTGLCPSFVVKASENSSFIGVADEFDLTGDASWLAESTTTFYMVGNMIGGMFIPPLADHYGRLPVFVATVLLMAVGGMISAFSTSIMMFCIMRMIHGIFYTAAGLAGWVLGYENTPLRLRFFTSVYFGVMWVVGACFLGLLAYILPDWRYLMFCISVPNIFVALLIYMTVPESLHFLVSSQQNEKIEAWLEKIRGPKGDISASDIVEDRDENGSSFKTLCREMWKHKMFIVYVLVMTYIWIVDTFIYFGLAFYSTNLAGNLYLNFVLMSLVEAPAYIFSPIFMNKYGRKVLISGTHIIAGLSFLGIVLSSEAWHIHFWLLGKFAISCSFMSIYMFASEIFPTDGRNKCIGFCETLSRFGGMLSPYLSHLTAVHALAPAITLSLIAVSGGLLTLILPETLNTKLPSTIAETASRRQLIDDKSDSSSN</sequence>
<name>YT13_CAEEL</name>
<feature type="chain" id="PRO_0000050467" description="Putative transporter B0252.3">
    <location>
        <begin position="1"/>
        <end position="484"/>
    </location>
</feature>
<feature type="transmembrane region" description="Helical" evidence="1">
    <location>
        <begin position="43"/>
        <end position="63"/>
    </location>
</feature>
<feature type="transmembrane region" description="Helical" evidence="1">
    <location>
        <begin position="95"/>
        <end position="115"/>
    </location>
</feature>
<feature type="transmembrane region" description="Helical" evidence="1">
    <location>
        <begin position="121"/>
        <end position="141"/>
    </location>
</feature>
<feature type="transmembrane region" description="Helical" evidence="1">
    <location>
        <begin position="144"/>
        <end position="164"/>
    </location>
</feature>
<feature type="transmembrane region" description="Helical" evidence="1">
    <location>
        <begin position="183"/>
        <end position="203"/>
    </location>
</feature>
<feature type="transmembrane region" description="Helical" evidence="1">
    <location>
        <begin position="208"/>
        <end position="228"/>
    </location>
</feature>
<feature type="transmembrane region" description="Helical" evidence="1">
    <location>
        <begin position="286"/>
        <end position="306"/>
    </location>
</feature>
<feature type="transmembrane region" description="Helical" evidence="1">
    <location>
        <begin position="321"/>
        <end position="341"/>
    </location>
</feature>
<feature type="transmembrane region" description="Helical" evidence="1">
    <location>
        <begin position="348"/>
        <end position="368"/>
    </location>
</feature>
<feature type="transmembrane region" description="Helical" evidence="1">
    <location>
        <begin position="373"/>
        <end position="393"/>
    </location>
</feature>
<feature type="transmembrane region" description="Helical" evidence="1">
    <location>
        <begin position="433"/>
        <end position="453"/>
    </location>
</feature>
<feature type="splice variant" id="VSP_009463" description="In isoform a." evidence="2">
    <location>
        <begin position="1"/>
        <end position="187"/>
    </location>
</feature>
<protein>
    <recommendedName>
        <fullName>Putative transporter B0252.3</fullName>
    </recommendedName>
</protein>
<reference key="1">
    <citation type="journal article" date="1998" name="Science">
        <title>Genome sequence of the nematode C. elegans: a platform for investigating biology.</title>
        <authorList>
            <consortium name="The C. elegans sequencing consortium"/>
        </authorList>
    </citation>
    <scope>NUCLEOTIDE SEQUENCE [LARGE SCALE GENOMIC DNA]</scope>
    <scope>ALTERNATIVE SPLICING</scope>
    <source>
        <strain>Bristol N2</strain>
    </source>
</reference>
<evidence type="ECO:0000255" key="1"/>
<evidence type="ECO:0000305" key="2"/>
<gene>
    <name type="ORF">B0252.3</name>
</gene>
<proteinExistence type="inferred from homology"/>